<geneLocation type="chloroplast"/>
<dbReference type="EC" id="7.1.1.-" evidence="1"/>
<dbReference type="EMBL" id="AF383760">
    <property type="protein sequence ID" value="AAN61702.1"/>
    <property type="molecule type" value="Genomic_DNA"/>
</dbReference>
<dbReference type="SMR" id="Q8HVV2"/>
<dbReference type="GO" id="GO:0009535">
    <property type="term" value="C:chloroplast thylakoid membrane"/>
    <property type="evidence" value="ECO:0007669"/>
    <property type="project" value="UniProtKB-SubCell"/>
</dbReference>
<dbReference type="GO" id="GO:0051539">
    <property type="term" value="F:4 iron, 4 sulfur cluster binding"/>
    <property type="evidence" value="ECO:0007669"/>
    <property type="project" value="UniProtKB-KW"/>
</dbReference>
<dbReference type="GO" id="GO:0005506">
    <property type="term" value="F:iron ion binding"/>
    <property type="evidence" value="ECO:0007669"/>
    <property type="project" value="UniProtKB-UniRule"/>
</dbReference>
<dbReference type="GO" id="GO:0008137">
    <property type="term" value="F:NADH dehydrogenase (ubiquinone) activity"/>
    <property type="evidence" value="ECO:0007669"/>
    <property type="project" value="InterPro"/>
</dbReference>
<dbReference type="GO" id="GO:0048038">
    <property type="term" value="F:quinone binding"/>
    <property type="evidence" value="ECO:0007669"/>
    <property type="project" value="UniProtKB-KW"/>
</dbReference>
<dbReference type="GO" id="GO:0019684">
    <property type="term" value="P:photosynthesis, light reaction"/>
    <property type="evidence" value="ECO:0007669"/>
    <property type="project" value="UniProtKB-UniRule"/>
</dbReference>
<dbReference type="FunFam" id="3.30.70.3270:FF:000006">
    <property type="entry name" value="NAD(P)H-quinone oxidoreductase subunit I, chloroplastic"/>
    <property type="match status" value="1"/>
</dbReference>
<dbReference type="Gene3D" id="3.30.70.3270">
    <property type="match status" value="1"/>
</dbReference>
<dbReference type="HAMAP" id="MF_01351">
    <property type="entry name" value="NDH1_NuoI"/>
    <property type="match status" value="1"/>
</dbReference>
<dbReference type="InterPro" id="IPR017896">
    <property type="entry name" value="4Fe4S_Fe-S-bd"/>
</dbReference>
<dbReference type="InterPro" id="IPR017900">
    <property type="entry name" value="4Fe4S_Fe_S_CS"/>
</dbReference>
<dbReference type="InterPro" id="IPR010226">
    <property type="entry name" value="NADH_quinone_OxRdtase_chainI"/>
</dbReference>
<dbReference type="InterPro" id="IPR004497">
    <property type="entry name" value="NDHI"/>
</dbReference>
<dbReference type="NCBIfam" id="TIGR00403">
    <property type="entry name" value="ndhI"/>
    <property type="match status" value="1"/>
</dbReference>
<dbReference type="NCBIfam" id="TIGR01971">
    <property type="entry name" value="NuoI"/>
    <property type="match status" value="1"/>
</dbReference>
<dbReference type="NCBIfam" id="NF004537">
    <property type="entry name" value="PRK05888.1-3"/>
    <property type="match status" value="1"/>
</dbReference>
<dbReference type="PANTHER" id="PTHR47275">
    <property type="entry name" value="NAD(P)H-QUINONE OXIDOREDUCTASE SUBUNIT I, CHLOROPLASTIC"/>
    <property type="match status" value="1"/>
</dbReference>
<dbReference type="PANTHER" id="PTHR47275:SF1">
    <property type="entry name" value="NAD(P)H-QUINONE OXIDOREDUCTASE SUBUNIT I, CHLOROPLASTIC"/>
    <property type="match status" value="1"/>
</dbReference>
<dbReference type="Pfam" id="PF00037">
    <property type="entry name" value="Fer4"/>
    <property type="match status" value="2"/>
</dbReference>
<dbReference type="SUPFAM" id="SSF54862">
    <property type="entry name" value="4Fe-4S ferredoxins"/>
    <property type="match status" value="1"/>
</dbReference>
<dbReference type="PROSITE" id="PS00198">
    <property type="entry name" value="4FE4S_FER_1"/>
    <property type="match status" value="2"/>
</dbReference>
<dbReference type="PROSITE" id="PS51379">
    <property type="entry name" value="4FE4S_FER_2"/>
    <property type="match status" value="2"/>
</dbReference>
<feature type="chain" id="PRO_0000250761" description="NAD(P)H-quinone oxidoreductase subunit I, chloroplastic">
    <location>
        <begin position="1"/>
        <end position="166"/>
    </location>
</feature>
<feature type="domain" description="4Fe-4S ferredoxin-type 1" evidence="1">
    <location>
        <begin position="55"/>
        <end position="84"/>
    </location>
</feature>
<feature type="domain" description="4Fe-4S ferredoxin-type 2" evidence="1">
    <location>
        <begin position="95"/>
        <end position="124"/>
    </location>
</feature>
<feature type="binding site" evidence="1">
    <location>
        <position position="64"/>
    </location>
    <ligand>
        <name>[4Fe-4S] cluster</name>
        <dbReference type="ChEBI" id="CHEBI:49883"/>
        <label>1</label>
    </ligand>
</feature>
<feature type="binding site" evidence="1">
    <location>
        <position position="67"/>
    </location>
    <ligand>
        <name>[4Fe-4S] cluster</name>
        <dbReference type="ChEBI" id="CHEBI:49883"/>
        <label>1</label>
    </ligand>
</feature>
<feature type="binding site" evidence="1">
    <location>
        <position position="70"/>
    </location>
    <ligand>
        <name>[4Fe-4S] cluster</name>
        <dbReference type="ChEBI" id="CHEBI:49883"/>
        <label>1</label>
    </ligand>
</feature>
<feature type="binding site" evidence="1">
    <location>
        <position position="74"/>
    </location>
    <ligand>
        <name>[4Fe-4S] cluster</name>
        <dbReference type="ChEBI" id="CHEBI:49883"/>
        <label>2</label>
    </ligand>
</feature>
<feature type="binding site" evidence="1">
    <location>
        <position position="104"/>
    </location>
    <ligand>
        <name>[4Fe-4S] cluster</name>
        <dbReference type="ChEBI" id="CHEBI:49883"/>
        <label>2</label>
    </ligand>
</feature>
<feature type="binding site" evidence="1">
    <location>
        <position position="107"/>
    </location>
    <ligand>
        <name>[4Fe-4S] cluster</name>
        <dbReference type="ChEBI" id="CHEBI:49883"/>
        <label>2</label>
    </ligand>
</feature>
<feature type="binding site" evidence="1">
    <location>
        <position position="110"/>
    </location>
    <ligand>
        <name>[4Fe-4S] cluster</name>
        <dbReference type="ChEBI" id="CHEBI:49883"/>
        <label>2</label>
    </ligand>
</feature>
<feature type="binding site" evidence="1">
    <location>
        <position position="114"/>
    </location>
    <ligand>
        <name>[4Fe-4S] cluster</name>
        <dbReference type="ChEBI" id="CHEBI:49883"/>
        <label>1</label>
    </ligand>
</feature>
<keyword id="KW-0004">4Fe-4S</keyword>
<keyword id="KW-0150">Chloroplast</keyword>
<keyword id="KW-0408">Iron</keyword>
<keyword id="KW-0411">Iron-sulfur</keyword>
<keyword id="KW-0472">Membrane</keyword>
<keyword id="KW-0479">Metal-binding</keyword>
<keyword id="KW-0520">NAD</keyword>
<keyword id="KW-0521">NADP</keyword>
<keyword id="KW-0934">Plastid</keyword>
<keyword id="KW-0618">Plastoquinone</keyword>
<keyword id="KW-0874">Quinone</keyword>
<keyword id="KW-0677">Repeat</keyword>
<keyword id="KW-0793">Thylakoid</keyword>
<keyword id="KW-1278">Translocase</keyword>
<reference key="1">
    <citation type="submission" date="2003-01" db="EMBL/GenBank/DDBJ databases">
        <title>Chloroplast DNA phylogeny of tribe Heliantheae (Asteraceae).</title>
        <authorList>
            <person name="Panero J.L."/>
            <person name="Baldwin B.G."/>
            <person name="Schilling E.E."/>
            <person name="Clevinger J.A."/>
        </authorList>
    </citation>
    <scope>NUCLEOTIDE SEQUENCE [GENOMIC DNA]</scope>
</reference>
<accession>Q8HVV2</accession>
<gene>
    <name evidence="1" type="primary">ndhI</name>
</gene>
<sequence>MFPMVTEFMNYGQQTVRAARYIGQGFMITLSHANRLPVTIQYPYEKLITSERFRGRIHFEFDKCIACEVCVRVCPIDLPVVDWKLETDIRKKRLLNYSIDFGICIFCGNCVEYCPTNCLSMTEEYELSTYDRHELNYNQIALGRLPMSVIDDYTIRTILNLPEIKT</sequence>
<organism>
    <name type="scientific">Blepharispermum zanguebaricum</name>
    <dbReference type="NCBI Taxonomy" id="41494"/>
    <lineage>
        <taxon>Eukaryota</taxon>
        <taxon>Viridiplantae</taxon>
        <taxon>Streptophyta</taxon>
        <taxon>Embryophyta</taxon>
        <taxon>Tracheophyta</taxon>
        <taxon>Spermatophyta</taxon>
        <taxon>Magnoliopsida</taxon>
        <taxon>eudicotyledons</taxon>
        <taxon>Gunneridae</taxon>
        <taxon>Pentapetalae</taxon>
        <taxon>asterids</taxon>
        <taxon>campanulids</taxon>
        <taxon>Asterales</taxon>
        <taxon>Asteraceae</taxon>
        <taxon>Asteroideae</taxon>
        <taxon>Athroismeae</taxon>
        <taxon>Athroisminae</taxon>
        <taxon>Blepharispermum</taxon>
    </lineage>
</organism>
<comment type="function">
    <text evidence="1">NDH shuttles electrons from NAD(P)H:plastoquinone, via FMN and iron-sulfur (Fe-S) centers, to quinones in the photosynthetic chain and possibly in a chloroplast respiratory chain. The immediate electron acceptor for the enzyme in this species is believed to be plastoquinone. Couples the redox reaction to proton translocation, and thus conserves the redox energy in a proton gradient.</text>
</comment>
<comment type="catalytic activity">
    <reaction evidence="1">
        <text>a plastoquinone + NADH + (n+1) H(+)(in) = a plastoquinol + NAD(+) + n H(+)(out)</text>
        <dbReference type="Rhea" id="RHEA:42608"/>
        <dbReference type="Rhea" id="RHEA-COMP:9561"/>
        <dbReference type="Rhea" id="RHEA-COMP:9562"/>
        <dbReference type="ChEBI" id="CHEBI:15378"/>
        <dbReference type="ChEBI" id="CHEBI:17757"/>
        <dbReference type="ChEBI" id="CHEBI:57540"/>
        <dbReference type="ChEBI" id="CHEBI:57945"/>
        <dbReference type="ChEBI" id="CHEBI:62192"/>
    </reaction>
</comment>
<comment type="catalytic activity">
    <reaction evidence="1">
        <text>a plastoquinone + NADPH + (n+1) H(+)(in) = a plastoquinol + NADP(+) + n H(+)(out)</text>
        <dbReference type="Rhea" id="RHEA:42612"/>
        <dbReference type="Rhea" id="RHEA-COMP:9561"/>
        <dbReference type="Rhea" id="RHEA-COMP:9562"/>
        <dbReference type="ChEBI" id="CHEBI:15378"/>
        <dbReference type="ChEBI" id="CHEBI:17757"/>
        <dbReference type="ChEBI" id="CHEBI:57783"/>
        <dbReference type="ChEBI" id="CHEBI:58349"/>
        <dbReference type="ChEBI" id="CHEBI:62192"/>
    </reaction>
</comment>
<comment type="cofactor">
    <cofactor evidence="1">
        <name>[4Fe-4S] cluster</name>
        <dbReference type="ChEBI" id="CHEBI:49883"/>
    </cofactor>
    <text evidence="1">Binds 2 [4Fe-4S] clusters per subunit.</text>
</comment>
<comment type="subunit">
    <text evidence="1">NDH is composed of at least 16 different subunits, 5 of which are encoded in the nucleus.</text>
</comment>
<comment type="subcellular location">
    <subcellularLocation>
        <location evidence="1">Plastid</location>
        <location evidence="1">Chloroplast thylakoid membrane</location>
        <topology evidence="1">Peripheral membrane protein</topology>
    </subcellularLocation>
</comment>
<comment type="similarity">
    <text evidence="1">Belongs to the complex I 23 kDa subunit family.</text>
</comment>
<name>NDHI_BLEZA</name>
<proteinExistence type="inferred from homology"/>
<evidence type="ECO:0000255" key="1">
    <source>
        <dbReference type="HAMAP-Rule" id="MF_01351"/>
    </source>
</evidence>
<protein>
    <recommendedName>
        <fullName evidence="1">NAD(P)H-quinone oxidoreductase subunit I, chloroplastic</fullName>
        <ecNumber evidence="1">7.1.1.-</ecNumber>
    </recommendedName>
    <alternativeName>
        <fullName evidence="1">NAD(P)H dehydrogenase subunit I</fullName>
        <shortName evidence="1">NDH subunit I</shortName>
    </alternativeName>
    <alternativeName>
        <fullName evidence="1">NADH-plastoquinone oxidoreductase subunit I</fullName>
    </alternativeName>
</protein>